<reference key="1">
    <citation type="submission" date="1998-12" db="EMBL/GenBank/DDBJ databases">
        <title>A gene cluster of ribosomal proteins in Brachyspira pilosicoli.</title>
        <authorList>
            <person name="Rayment S.J."/>
            <person name="Livesley M.A."/>
        </authorList>
    </citation>
    <scope>NUCLEOTIDE SEQUENCE [GENOMIC DNA]</scope>
    <source>
        <strain>ATCC 51139 / P43/6/78</strain>
    </source>
</reference>
<feature type="chain" id="PRO_0000129192" description="Large ribosomal subunit protein uL4">
    <location>
        <begin position="1"/>
        <end position="215"/>
    </location>
</feature>
<feature type="region of interest" description="Disordered" evidence="2">
    <location>
        <begin position="43"/>
        <end position="97"/>
    </location>
</feature>
<protein>
    <recommendedName>
        <fullName evidence="1">Large ribosomal subunit protein uL4</fullName>
    </recommendedName>
    <alternativeName>
        <fullName evidence="3">50S ribosomal protein L4</fullName>
    </alternativeName>
</protein>
<sequence>MEVVILNENGDSVGNLEVVDEIFKSEVNNNLLYEAIKNELANRRQGTHSTKTRAEVSGGGKKPWRQKGTGRARAGSTRSPIWVGGGKTHTPKPRDYSYRLPKKMKRKALLSVLSLKYGNNVLKVFEDFTFDAPKTKRMASFISKVKEPNSRKVAFVVGKDESLGDNYNKLLLSLRNIKDLKLVNADSMSIHPLYYADEVYFTKTALSKLNARIKG</sequence>
<proteinExistence type="inferred from homology"/>
<keyword id="KW-0687">Ribonucleoprotein</keyword>
<keyword id="KW-0689">Ribosomal protein</keyword>
<keyword id="KW-0694">RNA-binding</keyword>
<keyword id="KW-0699">rRNA-binding</keyword>
<accession>Q9FA03</accession>
<comment type="function">
    <text evidence="1">One of the primary rRNA binding proteins, this protein initially binds near the 5'-end of the 23S rRNA. It is important during the early stages of 50S assembly. It makes multiple contacts with different domains of the 23S rRNA in the assembled 50S subunit and ribosome.</text>
</comment>
<comment type="function">
    <text evidence="1">Forms part of the polypeptide exit tunnel.</text>
</comment>
<comment type="subunit">
    <text evidence="1">Part of the 50S ribosomal subunit.</text>
</comment>
<comment type="similarity">
    <text evidence="1">Belongs to the universal ribosomal protein uL4 family.</text>
</comment>
<gene>
    <name evidence="1" type="primary">rplD</name>
</gene>
<organism>
    <name type="scientific">Brachyspira pilosicoli</name>
    <name type="common">Serpulina pilosicoli</name>
    <dbReference type="NCBI Taxonomy" id="52584"/>
    <lineage>
        <taxon>Bacteria</taxon>
        <taxon>Pseudomonadati</taxon>
        <taxon>Spirochaetota</taxon>
        <taxon>Spirochaetia</taxon>
        <taxon>Brachyspirales</taxon>
        <taxon>Brachyspiraceae</taxon>
        <taxon>Brachyspira</taxon>
    </lineage>
</organism>
<dbReference type="EMBL" id="AF114845">
    <property type="protein sequence ID" value="AAG27265.1"/>
    <property type="molecule type" value="Genomic_DNA"/>
</dbReference>
<dbReference type="RefSeq" id="WP_013243969.1">
    <property type="nucleotide sequence ID" value="NZ_VYIY01000003.1"/>
</dbReference>
<dbReference type="SMR" id="Q9FA03"/>
<dbReference type="GeneID" id="56439590"/>
<dbReference type="OMA" id="PQVHILE"/>
<dbReference type="OrthoDB" id="9803201at2"/>
<dbReference type="GO" id="GO:1990904">
    <property type="term" value="C:ribonucleoprotein complex"/>
    <property type="evidence" value="ECO:0007669"/>
    <property type="project" value="UniProtKB-KW"/>
</dbReference>
<dbReference type="GO" id="GO:0005840">
    <property type="term" value="C:ribosome"/>
    <property type="evidence" value="ECO:0007669"/>
    <property type="project" value="UniProtKB-KW"/>
</dbReference>
<dbReference type="GO" id="GO:0019843">
    <property type="term" value="F:rRNA binding"/>
    <property type="evidence" value="ECO:0007669"/>
    <property type="project" value="UniProtKB-UniRule"/>
</dbReference>
<dbReference type="GO" id="GO:0003735">
    <property type="term" value="F:structural constituent of ribosome"/>
    <property type="evidence" value="ECO:0007669"/>
    <property type="project" value="InterPro"/>
</dbReference>
<dbReference type="GO" id="GO:0006412">
    <property type="term" value="P:translation"/>
    <property type="evidence" value="ECO:0007669"/>
    <property type="project" value="UniProtKB-UniRule"/>
</dbReference>
<dbReference type="Gene3D" id="3.40.1370.10">
    <property type="match status" value="1"/>
</dbReference>
<dbReference type="HAMAP" id="MF_01328_B">
    <property type="entry name" value="Ribosomal_uL4_B"/>
    <property type="match status" value="1"/>
</dbReference>
<dbReference type="InterPro" id="IPR002136">
    <property type="entry name" value="Ribosomal_uL4"/>
</dbReference>
<dbReference type="InterPro" id="IPR013005">
    <property type="entry name" value="Ribosomal_uL4-like"/>
</dbReference>
<dbReference type="InterPro" id="IPR023574">
    <property type="entry name" value="Ribosomal_uL4_dom_sf"/>
</dbReference>
<dbReference type="NCBIfam" id="TIGR03953">
    <property type="entry name" value="rplD_bact"/>
    <property type="match status" value="1"/>
</dbReference>
<dbReference type="PANTHER" id="PTHR10746">
    <property type="entry name" value="50S RIBOSOMAL PROTEIN L4"/>
    <property type="match status" value="1"/>
</dbReference>
<dbReference type="PANTHER" id="PTHR10746:SF6">
    <property type="entry name" value="LARGE RIBOSOMAL SUBUNIT PROTEIN UL4M"/>
    <property type="match status" value="1"/>
</dbReference>
<dbReference type="Pfam" id="PF00573">
    <property type="entry name" value="Ribosomal_L4"/>
    <property type="match status" value="1"/>
</dbReference>
<dbReference type="SUPFAM" id="SSF52166">
    <property type="entry name" value="Ribosomal protein L4"/>
    <property type="match status" value="1"/>
</dbReference>
<evidence type="ECO:0000255" key="1">
    <source>
        <dbReference type="HAMAP-Rule" id="MF_01328"/>
    </source>
</evidence>
<evidence type="ECO:0000256" key="2">
    <source>
        <dbReference type="SAM" id="MobiDB-lite"/>
    </source>
</evidence>
<evidence type="ECO:0000305" key="3"/>
<name>RL4_BRAPL</name>